<name>UBE2Z_DANRE</name>
<feature type="chain" id="PRO_0000280518" description="Ubiquitin-conjugating enzyme E2 Z">
    <location>
        <begin position="1"/>
        <end position="328"/>
    </location>
</feature>
<feature type="domain" description="UBC core" evidence="2">
    <location>
        <begin position="71"/>
        <end position="225"/>
    </location>
</feature>
<feature type="region of interest" description="Disordered" evidence="3">
    <location>
        <begin position="295"/>
        <end position="328"/>
    </location>
</feature>
<feature type="compositionally biased region" description="Low complexity" evidence="3">
    <location>
        <begin position="312"/>
        <end position="328"/>
    </location>
</feature>
<feature type="active site" description="Glycyl thioester intermediate" evidence="2">
    <location>
        <position position="160"/>
    </location>
</feature>
<protein>
    <recommendedName>
        <fullName>Ubiquitin-conjugating enzyme E2 Z</fullName>
        <ecNumber>2.3.2.23</ecNumber>
    </recommendedName>
    <alternativeName>
        <fullName>E2 ubiquitin-conjugating enzyme Z</fullName>
    </alternativeName>
    <alternativeName>
        <fullName>Ubiquitin carrier protein Z</fullName>
    </alternativeName>
    <alternativeName>
        <fullName>Ubiquitin-protein ligase Z</fullName>
    </alternativeName>
</protein>
<sequence length="328" mass="36451">MAHTITPAVESGLGVLTHAVSSTVPVAVLPSLPPGIGSGVPAGAGLLSQIHATSWDPTLSTDWDNEKASQQCILRIKRDIMSIYKEPPPGMFVVPDPHDMTKIHALITGPFDTPYEGGFFLFLFRCPPDYPIHPPRVKLITTGHNTVRFNPNFYRNGKVCLSILGTWTGPAWSPAQSISSVLISIQSLMTENPYHNEPGFEQERHPGDSKNYNECIRHETMRVAVCDMLEGKVSCPEALWSVMEKSFLEYYDFYEGVCKERLHLQGQNMQDPFGEKRGRFDYQGLLTRLRAIQRRLREKCPPEDNDGDSDSDTSSSGTDPDSQGSSQP</sequence>
<evidence type="ECO:0000250" key="1">
    <source>
        <dbReference type="UniProtKB" id="Q9H832"/>
    </source>
</evidence>
<evidence type="ECO:0000255" key="2">
    <source>
        <dbReference type="PROSITE-ProRule" id="PRU00388"/>
    </source>
</evidence>
<evidence type="ECO:0000256" key="3">
    <source>
        <dbReference type="SAM" id="MobiDB-lite"/>
    </source>
</evidence>
<evidence type="ECO:0000305" key="4"/>
<keyword id="KW-0053">Apoptosis</keyword>
<keyword id="KW-0067">ATP-binding</keyword>
<keyword id="KW-0963">Cytoplasm</keyword>
<keyword id="KW-0547">Nucleotide-binding</keyword>
<keyword id="KW-0539">Nucleus</keyword>
<keyword id="KW-1185">Reference proteome</keyword>
<keyword id="KW-0808">Transferase</keyword>
<keyword id="KW-0833">Ubl conjugation pathway</keyword>
<gene>
    <name type="primary">ube2z</name>
    <name type="ORF">zgc:92419</name>
</gene>
<accession>Q6DG60</accession>
<reference key="1">
    <citation type="submission" date="2004-07" db="EMBL/GenBank/DDBJ databases">
        <authorList>
            <consortium name="NIH - Zebrafish Gene Collection (ZGC) project"/>
        </authorList>
    </citation>
    <scope>NUCLEOTIDE SEQUENCE [LARGE SCALE MRNA]</scope>
</reference>
<organism>
    <name type="scientific">Danio rerio</name>
    <name type="common">Zebrafish</name>
    <name type="synonym">Brachydanio rerio</name>
    <dbReference type="NCBI Taxonomy" id="7955"/>
    <lineage>
        <taxon>Eukaryota</taxon>
        <taxon>Metazoa</taxon>
        <taxon>Chordata</taxon>
        <taxon>Craniata</taxon>
        <taxon>Vertebrata</taxon>
        <taxon>Euteleostomi</taxon>
        <taxon>Actinopterygii</taxon>
        <taxon>Neopterygii</taxon>
        <taxon>Teleostei</taxon>
        <taxon>Ostariophysi</taxon>
        <taxon>Cypriniformes</taxon>
        <taxon>Danionidae</taxon>
        <taxon>Danioninae</taxon>
        <taxon>Danio</taxon>
    </lineage>
</organism>
<comment type="function">
    <text evidence="2">Catalyzes the covalent attachment of ubiquitin to other proteins. May be involved in apoptosis regulation.</text>
</comment>
<comment type="catalytic activity">
    <reaction evidence="2">
        <text>S-ubiquitinyl-[E1 ubiquitin-activating enzyme]-L-cysteine + [E2 ubiquitin-conjugating enzyme]-L-cysteine = [E1 ubiquitin-activating enzyme]-L-cysteine + S-ubiquitinyl-[E2 ubiquitin-conjugating enzyme]-L-cysteine.</text>
        <dbReference type="EC" id="2.3.2.23"/>
    </reaction>
</comment>
<comment type="pathway">
    <text evidence="2">Protein modification; protein ubiquitination.</text>
</comment>
<comment type="subcellular location">
    <subcellularLocation>
        <location evidence="1">Cytoplasm</location>
    </subcellularLocation>
    <subcellularLocation>
        <location evidence="1">Nucleus</location>
    </subcellularLocation>
</comment>
<comment type="similarity">
    <text evidence="2">Belongs to the ubiquitin-conjugating enzyme family.</text>
</comment>
<comment type="sequence caution" evidence="4">
    <conflict type="erroneous initiation">
        <sequence resource="EMBL-CDS" id="AAH76491"/>
    </conflict>
</comment>
<proteinExistence type="evidence at transcript level"/>
<dbReference type="EC" id="2.3.2.23"/>
<dbReference type="EMBL" id="BC076491">
    <property type="protein sequence ID" value="AAH76491.1"/>
    <property type="status" value="ALT_INIT"/>
    <property type="molecule type" value="mRNA"/>
</dbReference>
<dbReference type="SMR" id="Q6DG60"/>
<dbReference type="FunCoup" id="Q6DG60">
    <property type="interactions" value="1394"/>
</dbReference>
<dbReference type="STRING" id="7955.ENSDARP00000128495"/>
<dbReference type="PaxDb" id="7955-ENSDARP00000128495"/>
<dbReference type="AGR" id="ZFIN:ZDB-GENE-040718-15"/>
<dbReference type="ZFIN" id="ZDB-GENE-040718-15">
    <property type="gene designation" value="ube2z"/>
</dbReference>
<dbReference type="eggNOG" id="KOG0895">
    <property type="taxonomic scope" value="Eukaryota"/>
</dbReference>
<dbReference type="InParanoid" id="Q6DG60"/>
<dbReference type="Reactome" id="R-DRE-983168">
    <property type="pathway name" value="Antigen processing: Ubiquitination &amp; Proteasome degradation"/>
</dbReference>
<dbReference type="UniPathway" id="UPA00143"/>
<dbReference type="PRO" id="PR:Q6DG60"/>
<dbReference type="Proteomes" id="UP000000437">
    <property type="component" value="Unplaced"/>
</dbReference>
<dbReference type="GO" id="GO:0005737">
    <property type="term" value="C:cytoplasm"/>
    <property type="evidence" value="ECO:0007669"/>
    <property type="project" value="UniProtKB-SubCell"/>
</dbReference>
<dbReference type="GO" id="GO:0005634">
    <property type="term" value="C:nucleus"/>
    <property type="evidence" value="ECO:0000318"/>
    <property type="project" value="GO_Central"/>
</dbReference>
<dbReference type="GO" id="GO:0005524">
    <property type="term" value="F:ATP binding"/>
    <property type="evidence" value="ECO:0007669"/>
    <property type="project" value="UniProtKB-KW"/>
</dbReference>
<dbReference type="GO" id="GO:0061631">
    <property type="term" value="F:ubiquitin conjugating enzyme activity"/>
    <property type="evidence" value="ECO:0000318"/>
    <property type="project" value="GO_Central"/>
</dbReference>
<dbReference type="GO" id="GO:0006915">
    <property type="term" value="P:apoptotic process"/>
    <property type="evidence" value="ECO:0007669"/>
    <property type="project" value="UniProtKB-KW"/>
</dbReference>
<dbReference type="GO" id="GO:0043066">
    <property type="term" value="P:negative regulation of apoptotic process"/>
    <property type="evidence" value="ECO:0000318"/>
    <property type="project" value="GO_Central"/>
</dbReference>
<dbReference type="GO" id="GO:0016567">
    <property type="term" value="P:protein ubiquitination"/>
    <property type="evidence" value="ECO:0007669"/>
    <property type="project" value="UniProtKB-UniPathway"/>
</dbReference>
<dbReference type="CDD" id="cd23809">
    <property type="entry name" value="UBCc_UBE2Z"/>
    <property type="match status" value="1"/>
</dbReference>
<dbReference type="FunFam" id="3.10.110.10:FF:000046">
    <property type="entry name" value="Ubiquitin-conjugating enzyme E2 Z"/>
    <property type="match status" value="1"/>
</dbReference>
<dbReference type="Gene3D" id="3.10.110.10">
    <property type="entry name" value="Ubiquitin Conjugating Enzyme"/>
    <property type="match status" value="1"/>
</dbReference>
<dbReference type="InterPro" id="IPR000608">
    <property type="entry name" value="UBQ-conjugat_E2_core"/>
</dbReference>
<dbReference type="InterPro" id="IPR016135">
    <property type="entry name" value="UBQ-conjugating_enzyme/RWD"/>
</dbReference>
<dbReference type="PANTHER" id="PTHR46116">
    <property type="entry name" value="(E3-INDEPENDENT) E2 UBIQUITIN-CONJUGATING ENZYME"/>
    <property type="match status" value="1"/>
</dbReference>
<dbReference type="PANTHER" id="PTHR46116:SF26">
    <property type="entry name" value="UBIQUITIN-CONJUGATING ENZYME E2 Z"/>
    <property type="match status" value="1"/>
</dbReference>
<dbReference type="Pfam" id="PF00179">
    <property type="entry name" value="UQ_con"/>
    <property type="match status" value="1"/>
</dbReference>
<dbReference type="SMART" id="SM00212">
    <property type="entry name" value="UBCc"/>
    <property type="match status" value="1"/>
</dbReference>
<dbReference type="SUPFAM" id="SSF54495">
    <property type="entry name" value="UBC-like"/>
    <property type="match status" value="1"/>
</dbReference>
<dbReference type="PROSITE" id="PS50127">
    <property type="entry name" value="UBC_2"/>
    <property type="match status" value="1"/>
</dbReference>